<comment type="function">
    <text evidence="2">Catalyzes the conversion of GDP-D-mannose to GDP-4-dehydro-6-deoxy-D-mannose.</text>
</comment>
<comment type="catalytic activity">
    <reaction evidence="2">
        <text>GDP-alpha-D-mannose = GDP-4-dehydro-alpha-D-rhamnose + H2O</text>
        <dbReference type="Rhea" id="RHEA:23820"/>
        <dbReference type="ChEBI" id="CHEBI:15377"/>
        <dbReference type="ChEBI" id="CHEBI:57527"/>
        <dbReference type="ChEBI" id="CHEBI:57964"/>
        <dbReference type="EC" id="4.2.1.47"/>
    </reaction>
    <physiologicalReaction direction="left-to-right" evidence="2">
        <dbReference type="Rhea" id="RHEA:23821"/>
    </physiologicalReaction>
</comment>
<comment type="cofactor">
    <cofactor evidence="2">
        <name>NADP(+)</name>
        <dbReference type="ChEBI" id="CHEBI:58349"/>
    </cofactor>
</comment>
<comment type="activity regulation">
    <text evidence="2">Inhibited by GDP-fucose.</text>
</comment>
<comment type="pathway">
    <text evidence="2">Nucleotide-sugar biosynthesis; GDP-L-fucose biosynthesis via de novo pathway; GDP-L-fucose from GDP-alpha-D-mannose: step 1/2.</text>
</comment>
<comment type="similarity">
    <text evidence="4">Belongs to the NAD(P)-dependent epimerase/dehydratase family. GDP-mannose 4,6-dehydratase subfamily.</text>
</comment>
<organism>
    <name type="scientific">Cricetulus griseus</name>
    <name type="common">Chinese hamster</name>
    <name type="synonym">Cricetulus barabensis griseus</name>
    <dbReference type="NCBI Taxonomy" id="10029"/>
    <lineage>
        <taxon>Eukaryota</taxon>
        <taxon>Metazoa</taxon>
        <taxon>Chordata</taxon>
        <taxon>Craniata</taxon>
        <taxon>Vertebrata</taxon>
        <taxon>Euteleostomi</taxon>
        <taxon>Mammalia</taxon>
        <taxon>Eutheria</taxon>
        <taxon>Euarchontoglires</taxon>
        <taxon>Glires</taxon>
        <taxon>Rodentia</taxon>
        <taxon>Myomorpha</taxon>
        <taxon>Muroidea</taxon>
        <taxon>Cricetidae</taxon>
        <taxon>Cricetinae</taxon>
        <taxon>Cricetulus</taxon>
    </lineage>
</organism>
<keyword id="KW-0007">Acetylation</keyword>
<keyword id="KW-0456">Lyase</keyword>
<keyword id="KW-0521">NADP</keyword>
<keyword id="KW-0597">Phosphoprotein</keyword>
<sequence length="372" mass="41974">MAHAPASCPSSRNSGDGDKGKPRKVALITGITGQDGSYLAEFLLEKGYEVHGIVRRSSSFNTGRIEHLYKNPQAHIEGNMKLHYGDLTDSTCLVKIINEVKPTEIYNLGAQSHVKISFDLAEYTADVDGVGTLRLLDAIKTCGLINSVKFYQASTSELYGKVQEIPQKETTPFYPRSPYGAAKLYAYWIVVNFREAYNLFAVNGILFNHESPRRGANFVTRKISRSVAKIYLGQLECFSLGNLDAKRDWGHAKDYVEAMWLMLQNDEPEDFVIATGEVHSVREFVEKSFMHIGKTIVWEGKNENEVGRCKETGKIHVTVDLKYYRPTEVDFLQGDCSKAQQKLNWKPRVAFDELVREMVQADVELMRTNPNA</sequence>
<gene>
    <name type="primary">GMDS</name>
    <name type="synonym">GMD</name>
</gene>
<protein>
    <recommendedName>
        <fullName>GDP-mannose 4,6 dehydratase</fullName>
        <ecNumber evidence="2">4.2.1.47</ecNumber>
    </recommendedName>
    <alternativeName>
        <fullName>GDP-D-mannose dehydratase</fullName>
        <shortName>GMD</shortName>
    </alternativeName>
</protein>
<feature type="initiator methionine" description="Removed" evidence="2">
    <location>
        <position position="1"/>
    </location>
</feature>
<feature type="chain" id="PRO_0000201704" description="GDP-mannose 4,6 dehydratase">
    <location>
        <begin position="2"/>
        <end position="372"/>
    </location>
</feature>
<feature type="region of interest" description="Disordered" evidence="3">
    <location>
        <begin position="1"/>
        <end position="22"/>
    </location>
</feature>
<feature type="active site" evidence="1">
    <location>
        <position position="155"/>
    </location>
</feature>
<feature type="active site" description="Nucleophile" evidence="1">
    <location>
        <position position="157"/>
    </location>
</feature>
<feature type="active site" description="Nucleophile" evidence="1">
    <location>
        <position position="179"/>
    </location>
</feature>
<feature type="binding site" evidence="2">
    <location>
        <begin position="30"/>
        <end position="35"/>
    </location>
    <ligand>
        <name>NADP(+)</name>
        <dbReference type="ChEBI" id="CHEBI:58349"/>
    </ligand>
</feature>
<feature type="binding site" evidence="2">
    <location>
        <begin position="55"/>
        <end position="58"/>
    </location>
    <ligand>
        <name>NADP(+)</name>
        <dbReference type="ChEBI" id="CHEBI:58349"/>
    </ligand>
</feature>
<feature type="binding site" evidence="2">
    <location>
        <begin position="86"/>
        <end position="87"/>
    </location>
    <ligand>
        <name>NADP(+)</name>
        <dbReference type="ChEBI" id="CHEBI:58349"/>
    </ligand>
</feature>
<feature type="binding site" evidence="2">
    <location>
        <begin position="108"/>
        <end position="112"/>
    </location>
    <ligand>
        <name>NADP(+)</name>
        <dbReference type="ChEBI" id="CHEBI:58349"/>
    </ligand>
</feature>
<feature type="binding site" evidence="2">
    <location>
        <position position="123"/>
    </location>
    <ligand>
        <name>NADP(+)</name>
        <dbReference type="ChEBI" id="CHEBI:58349"/>
    </ligand>
</feature>
<feature type="binding site" evidence="2">
    <location>
        <position position="183"/>
    </location>
    <ligand>
        <name>NADP(+)</name>
        <dbReference type="ChEBI" id="CHEBI:58349"/>
    </ligand>
</feature>
<feature type="binding site" evidence="2">
    <location>
        <position position="209"/>
    </location>
    <ligand>
        <name>NADP(+)</name>
        <dbReference type="ChEBI" id="CHEBI:58349"/>
    </ligand>
</feature>
<feature type="binding site" evidence="2">
    <location>
        <position position="214"/>
    </location>
    <ligand>
        <name>NADP(+)</name>
        <dbReference type="ChEBI" id="CHEBI:58349"/>
    </ligand>
</feature>
<feature type="modified residue" description="N-acetylalanine" evidence="2">
    <location>
        <position position="2"/>
    </location>
</feature>
<feature type="modified residue" description="Phosphotyrosine" evidence="2">
    <location>
        <position position="323"/>
    </location>
</feature>
<evidence type="ECO:0000250" key="1"/>
<evidence type="ECO:0000250" key="2">
    <source>
        <dbReference type="UniProtKB" id="O60547"/>
    </source>
</evidence>
<evidence type="ECO:0000256" key="3">
    <source>
        <dbReference type="SAM" id="MobiDB-lite"/>
    </source>
</evidence>
<evidence type="ECO:0000305" key="4"/>
<dbReference type="EC" id="4.2.1.47" evidence="2"/>
<dbReference type="EMBL" id="AF525364">
    <property type="protein sequence ID" value="AAM91925.1"/>
    <property type="molecule type" value="mRNA"/>
</dbReference>
<dbReference type="RefSeq" id="NP_001233625.1">
    <property type="nucleotide sequence ID" value="NM_001246696.1"/>
</dbReference>
<dbReference type="SMR" id="Q8K3X3"/>
<dbReference type="PaxDb" id="10029-NP_001233625.1"/>
<dbReference type="Ensembl" id="ENSCGRT00001017103.1">
    <property type="protein sequence ID" value="ENSCGRP00001012868.1"/>
    <property type="gene ID" value="ENSCGRG00001014163.1"/>
</dbReference>
<dbReference type="GeneID" id="100689436"/>
<dbReference type="KEGG" id="cge:100689436"/>
<dbReference type="CTD" id="2762"/>
<dbReference type="eggNOG" id="KOG1372">
    <property type="taxonomic scope" value="Eukaryota"/>
</dbReference>
<dbReference type="GeneTree" id="ENSGT00440000033640"/>
<dbReference type="OrthoDB" id="10253554at2759"/>
<dbReference type="BRENDA" id="4.2.1.47">
    <property type="organism ID" value="1309"/>
</dbReference>
<dbReference type="UniPathway" id="UPA00128">
    <property type="reaction ID" value="UER00190"/>
</dbReference>
<dbReference type="Proteomes" id="UP000694386">
    <property type="component" value="Unplaced"/>
</dbReference>
<dbReference type="Proteomes" id="UP001108280">
    <property type="component" value="Chromosome 3"/>
</dbReference>
<dbReference type="GO" id="GO:0005829">
    <property type="term" value="C:cytosol"/>
    <property type="evidence" value="ECO:0007669"/>
    <property type="project" value="Ensembl"/>
</dbReference>
<dbReference type="GO" id="GO:0008446">
    <property type="term" value="F:GDP-mannose 4,6-dehydratase activity"/>
    <property type="evidence" value="ECO:0000250"/>
    <property type="project" value="UniProtKB"/>
</dbReference>
<dbReference type="GO" id="GO:0042802">
    <property type="term" value="F:identical protein binding"/>
    <property type="evidence" value="ECO:0007669"/>
    <property type="project" value="Ensembl"/>
</dbReference>
<dbReference type="GO" id="GO:0070401">
    <property type="term" value="F:NADP+ binding"/>
    <property type="evidence" value="ECO:0000250"/>
    <property type="project" value="UniProtKB"/>
</dbReference>
<dbReference type="GO" id="GO:0042351">
    <property type="term" value="P:'de novo' GDP-L-fucose biosynthetic process"/>
    <property type="evidence" value="ECO:0000250"/>
    <property type="project" value="UniProtKB"/>
</dbReference>
<dbReference type="GO" id="GO:0019673">
    <property type="term" value="P:GDP-mannose metabolic process"/>
    <property type="evidence" value="ECO:0000250"/>
    <property type="project" value="UniProtKB"/>
</dbReference>
<dbReference type="GO" id="GO:0007219">
    <property type="term" value="P:Notch signaling pathway"/>
    <property type="evidence" value="ECO:0000250"/>
    <property type="project" value="UniProtKB"/>
</dbReference>
<dbReference type="CDD" id="cd05260">
    <property type="entry name" value="GDP_MD_SDR_e"/>
    <property type="match status" value="1"/>
</dbReference>
<dbReference type="FunFam" id="3.40.50.720:FF:001053">
    <property type="entry name" value="GDP-mannose 4,6 dehydratase"/>
    <property type="match status" value="1"/>
</dbReference>
<dbReference type="Gene3D" id="3.40.50.720">
    <property type="entry name" value="NAD(P)-binding Rossmann-like Domain"/>
    <property type="match status" value="1"/>
</dbReference>
<dbReference type="Gene3D" id="3.90.25.10">
    <property type="entry name" value="UDP-galactose 4-epimerase, domain 1"/>
    <property type="match status" value="1"/>
</dbReference>
<dbReference type="HAMAP" id="MF_00955">
    <property type="entry name" value="GDP_Man_dehydratase"/>
    <property type="match status" value="1"/>
</dbReference>
<dbReference type="InterPro" id="IPR006368">
    <property type="entry name" value="GDP_Man_deHydtase"/>
</dbReference>
<dbReference type="InterPro" id="IPR016040">
    <property type="entry name" value="NAD(P)-bd_dom"/>
</dbReference>
<dbReference type="InterPro" id="IPR036291">
    <property type="entry name" value="NAD(P)-bd_dom_sf"/>
</dbReference>
<dbReference type="NCBIfam" id="TIGR01472">
    <property type="entry name" value="gmd"/>
    <property type="match status" value="1"/>
</dbReference>
<dbReference type="PANTHER" id="PTHR43715:SF1">
    <property type="entry name" value="GDP-MANNOSE 4,6 DEHYDRATASE"/>
    <property type="match status" value="1"/>
</dbReference>
<dbReference type="PANTHER" id="PTHR43715">
    <property type="entry name" value="GDP-MANNOSE 4,6-DEHYDRATASE"/>
    <property type="match status" value="1"/>
</dbReference>
<dbReference type="Pfam" id="PF16363">
    <property type="entry name" value="GDP_Man_Dehyd"/>
    <property type="match status" value="1"/>
</dbReference>
<dbReference type="SUPFAM" id="SSF51735">
    <property type="entry name" value="NAD(P)-binding Rossmann-fold domains"/>
    <property type="match status" value="1"/>
</dbReference>
<name>GMDS_CRIGR</name>
<accession>Q8K3X3</accession>
<proteinExistence type="evidence at transcript level"/>
<reference key="1">
    <citation type="submission" date="2002-06" db="EMBL/GenBank/DDBJ databases">
        <title>Glycan-dependent regulation of GDP-mannose 4,6-dehydratase activity.</title>
        <authorList>
            <person name="Becker D.J."/>
            <person name="Smith P.L."/>
            <person name="Petryniak B."/>
            <person name="Kelly R.J."/>
            <person name="Myers J.T."/>
            <person name="Wu B."/>
            <person name="Wang P.G."/>
            <person name="Lowe J.B."/>
        </authorList>
    </citation>
    <scope>NUCLEOTIDE SEQUENCE [MRNA]</scope>
</reference>